<evidence type="ECO:0000255" key="1">
    <source>
        <dbReference type="HAMAP-Rule" id="MF_01328"/>
    </source>
</evidence>
<evidence type="ECO:0000256" key="2">
    <source>
        <dbReference type="SAM" id="MobiDB-lite"/>
    </source>
</evidence>
<evidence type="ECO:0000305" key="3"/>
<gene>
    <name evidence="1" type="primary">rplD</name>
    <name type="ordered locus">SAV_4927</name>
</gene>
<name>RL4_STRAW</name>
<keyword id="KW-1185">Reference proteome</keyword>
<keyword id="KW-0687">Ribonucleoprotein</keyword>
<keyword id="KW-0689">Ribosomal protein</keyword>
<keyword id="KW-0694">RNA-binding</keyword>
<keyword id="KW-0699">rRNA-binding</keyword>
<dbReference type="EMBL" id="BA000030">
    <property type="protein sequence ID" value="BAC72639.1"/>
    <property type="molecule type" value="Genomic_DNA"/>
</dbReference>
<dbReference type="RefSeq" id="WP_010986343.1">
    <property type="nucleotide sequence ID" value="NZ_JZJK01000077.1"/>
</dbReference>
<dbReference type="SMR" id="Q82DP4"/>
<dbReference type="GeneID" id="41542010"/>
<dbReference type="KEGG" id="sma:SAVERM_4927"/>
<dbReference type="eggNOG" id="COG0088">
    <property type="taxonomic scope" value="Bacteria"/>
</dbReference>
<dbReference type="HOGENOM" id="CLU_041575_5_0_11"/>
<dbReference type="OrthoDB" id="9803201at2"/>
<dbReference type="Proteomes" id="UP000000428">
    <property type="component" value="Chromosome"/>
</dbReference>
<dbReference type="GO" id="GO:1990904">
    <property type="term" value="C:ribonucleoprotein complex"/>
    <property type="evidence" value="ECO:0007669"/>
    <property type="project" value="UniProtKB-KW"/>
</dbReference>
<dbReference type="GO" id="GO:0005840">
    <property type="term" value="C:ribosome"/>
    <property type="evidence" value="ECO:0007669"/>
    <property type="project" value="UniProtKB-KW"/>
</dbReference>
<dbReference type="GO" id="GO:0019843">
    <property type="term" value="F:rRNA binding"/>
    <property type="evidence" value="ECO:0007669"/>
    <property type="project" value="UniProtKB-UniRule"/>
</dbReference>
<dbReference type="GO" id="GO:0003735">
    <property type="term" value="F:structural constituent of ribosome"/>
    <property type="evidence" value="ECO:0007669"/>
    <property type="project" value="InterPro"/>
</dbReference>
<dbReference type="GO" id="GO:0006412">
    <property type="term" value="P:translation"/>
    <property type="evidence" value="ECO:0007669"/>
    <property type="project" value="UniProtKB-UniRule"/>
</dbReference>
<dbReference type="FunFam" id="3.40.1370.10:FF:000004">
    <property type="entry name" value="50S ribosomal protein L4"/>
    <property type="match status" value="1"/>
</dbReference>
<dbReference type="Gene3D" id="3.40.1370.10">
    <property type="match status" value="1"/>
</dbReference>
<dbReference type="HAMAP" id="MF_01328_B">
    <property type="entry name" value="Ribosomal_uL4_B"/>
    <property type="match status" value="1"/>
</dbReference>
<dbReference type="InterPro" id="IPR002136">
    <property type="entry name" value="Ribosomal_uL4"/>
</dbReference>
<dbReference type="InterPro" id="IPR013005">
    <property type="entry name" value="Ribosomal_uL4-like"/>
</dbReference>
<dbReference type="InterPro" id="IPR023574">
    <property type="entry name" value="Ribosomal_uL4_dom_sf"/>
</dbReference>
<dbReference type="NCBIfam" id="TIGR03953">
    <property type="entry name" value="rplD_bact"/>
    <property type="match status" value="1"/>
</dbReference>
<dbReference type="PANTHER" id="PTHR10746">
    <property type="entry name" value="50S RIBOSOMAL PROTEIN L4"/>
    <property type="match status" value="1"/>
</dbReference>
<dbReference type="PANTHER" id="PTHR10746:SF6">
    <property type="entry name" value="LARGE RIBOSOMAL SUBUNIT PROTEIN UL4M"/>
    <property type="match status" value="1"/>
</dbReference>
<dbReference type="Pfam" id="PF00573">
    <property type="entry name" value="Ribosomal_L4"/>
    <property type="match status" value="1"/>
</dbReference>
<dbReference type="SUPFAM" id="SSF52166">
    <property type="entry name" value="Ribosomal protein L4"/>
    <property type="match status" value="1"/>
</dbReference>
<accession>Q82DP4</accession>
<sequence>MSTIDILSPSGDNAGTVELPAEIFDVEKISIPLLHQVVVAQLAAARQGTHKVKRRGEVRGGGKKPYRQKGTGRARQGSTRAPQFAGGGVVHGPTPRDYSQRTPKKMKAAALRHALTDRARNARIHVITGVIEGETPSTKAAKSFLGKVSERKNVLLVIERSDEAALLSARNLPQVHILEPGQLNTYDVLVSDDVVFTQAAFESFVSGAPQSSAADTEGSEA</sequence>
<protein>
    <recommendedName>
        <fullName evidence="1">Large ribosomal subunit protein uL4</fullName>
    </recommendedName>
    <alternativeName>
        <fullName evidence="3">50S ribosomal protein L4</fullName>
    </alternativeName>
</protein>
<reference key="1">
    <citation type="journal article" date="2001" name="Proc. Natl. Acad. Sci. U.S.A.">
        <title>Genome sequence of an industrial microorganism Streptomyces avermitilis: deducing the ability of producing secondary metabolites.</title>
        <authorList>
            <person name="Omura S."/>
            <person name="Ikeda H."/>
            <person name="Ishikawa J."/>
            <person name="Hanamoto A."/>
            <person name="Takahashi C."/>
            <person name="Shinose M."/>
            <person name="Takahashi Y."/>
            <person name="Horikawa H."/>
            <person name="Nakazawa H."/>
            <person name="Osonoe T."/>
            <person name="Kikuchi H."/>
            <person name="Shiba T."/>
            <person name="Sakaki Y."/>
            <person name="Hattori M."/>
        </authorList>
    </citation>
    <scope>NUCLEOTIDE SEQUENCE [LARGE SCALE GENOMIC DNA]</scope>
    <source>
        <strain>ATCC 31267 / DSM 46492 / JCM 5070 / NBRC 14893 / NCIMB 12804 / NRRL 8165 / MA-4680</strain>
    </source>
</reference>
<reference key="2">
    <citation type="journal article" date="2003" name="Nat. Biotechnol.">
        <title>Complete genome sequence and comparative analysis of the industrial microorganism Streptomyces avermitilis.</title>
        <authorList>
            <person name="Ikeda H."/>
            <person name="Ishikawa J."/>
            <person name="Hanamoto A."/>
            <person name="Shinose M."/>
            <person name="Kikuchi H."/>
            <person name="Shiba T."/>
            <person name="Sakaki Y."/>
            <person name="Hattori M."/>
            <person name="Omura S."/>
        </authorList>
    </citation>
    <scope>NUCLEOTIDE SEQUENCE [LARGE SCALE GENOMIC DNA]</scope>
    <source>
        <strain>ATCC 31267 / DSM 46492 / JCM 5070 / NBRC 14893 / NCIMB 12804 / NRRL 8165 / MA-4680</strain>
    </source>
</reference>
<feature type="chain" id="PRO_0000129286" description="Large ribosomal subunit protein uL4">
    <location>
        <begin position="1"/>
        <end position="221"/>
    </location>
</feature>
<feature type="region of interest" description="Disordered" evidence="2">
    <location>
        <begin position="44"/>
        <end position="102"/>
    </location>
</feature>
<feature type="compositionally biased region" description="Basic residues" evidence="2">
    <location>
        <begin position="61"/>
        <end position="72"/>
    </location>
</feature>
<proteinExistence type="inferred from homology"/>
<organism>
    <name type="scientific">Streptomyces avermitilis (strain ATCC 31267 / DSM 46492 / JCM 5070 / NBRC 14893 / NCIMB 12804 / NRRL 8165 / MA-4680)</name>
    <dbReference type="NCBI Taxonomy" id="227882"/>
    <lineage>
        <taxon>Bacteria</taxon>
        <taxon>Bacillati</taxon>
        <taxon>Actinomycetota</taxon>
        <taxon>Actinomycetes</taxon>
        <taxon>Kitasatosporales</taxon>
        <taxon>Streptomycetaceae</taxon>
        <taxon>Streptomyces</taxon>
    </lineage>
</organism>
<comment type="function">
    <text evidence="1">One of the primary rRNA binding proteins, this protein initially binds near the 5'-end of the 23S rRNA. It is important during the early stages of 50S assembly. It makes multiple contacts with different domains of the 23S rRNA in the assembled 50S subunit and ribosome.</text>
</comment>
<comment type="function">
    <text evidence="1">Forms part of the polypeptide exit tunnel.</text>
</comment>
<comment type="subunit">
    <text evidence="1">Part of the 50S ribosomal subunit.</text>
</comment>
<comment type="similarity">
    <text evidence="1">Belongs to the universal ribosomal protein uL4 family.</text>
</comment>